<dbReference type="PIR" id="A02360">
    <property type="entry name" value="HBMQF"/>
</dbReference>
<dbReference type="SMR" id="P02039"/>
<dbReference type="GO" id="GO:0072562">
    <property type="term" value="C:blood microparticle"/>
    <property type="evidence" value="ECO:0007669"/>
    <property type="project" value="TreeGrafter"/>
</dbReference>
<dbReference type="GO" id="GO:0031838">
    <property type="term" value="C:haptoglobin-hemoglobin complex"/>
    <property type="evidence" value="ECO:0007669"/>
    <property type="project" value="TreeGrafter"/>
</dbReference>
<dbReference type="GO" id="GO:0005833">
    <property type="term" value="C:hemoglobin complex"/>
    <property type="evidence" value="ECO:0007669"/>
    <property type="project" value="InterPro"/>
</dbReference>
<dbReference type="GO" id="GO:0031720">
    <property type="term" value="F:haptoglobin binding"/>
    <property type="evidence" value="ECO:0007669"/>
    <property type="project" value="TreeGrafter"/>
</dbReference>
<dbReference type="GO" id="GO:0020037">
    <property type="term" value="F:heme binding"/>
    <property type="evidence" value="ECO:0007669"/>
    <property type="project" value="InterPro"/>
</dbReference>
<dbReference type="GO" id="GO:0031721">
    <property type="term" value="F:hemoglobin alpha binding"/>
    <property type="evidence" value="ECO:0007669"/>
    <property type="project" value="TreeGrafter"/>
</dbReference>
<dbReference type="GO" id="GO:0046872">
    <property type="term" value="F:metal ion binding"/>
    <property type="evidence" value="ECO:0007669"/>
    <property type="project" value="UniProtKB-KW"/>
</dbReference>
<dbReference type="GO" id="GO:0043177">
    <property type="term" value="F:organic acid binding"/>
    <property type="evidence" value="ECO:0007669"/>
    <property type="project" value="TreeGrafter"/>
</dbReference>
<dbReference type="GO" id="GO:0019825">
    <property type="term" value="F:oxygen binding"/>
    <property type="evidence" value="ECO:0007669"/>
    <property type="project" value="InterPro"/>
</dbReference>
<dbReference type="GO" id="GO:0005344">
    <property type="term" value="F:oxygen carrier activity"/>
    <property type="evidence" value="ECO:0007669"/>
    <property type="project" value="UniProtKB-KW"/>
</dbReference>
<dbReference type="GO" id="GO:0004601">
    <property type="term" value="F:peroxidase activity"/>
    <property type="evidence" value="ECO:0007669"/>
    <property type="project" value="TreeGrafter"/>
</dbReference>
<dbReference type="GO" id="GO:0042744">
    <property type="term" value="P:hydrogen peroxide catabolic process"/>
    <property type="evidence" value="ECO:0007669"/>
    <property type="project" value="TreeGrafter"/>
</dbReference>
<dbReference type="CDD" id="cd08925">
    <property type="entry name" value="Hb-beta-like"/>
    <property type="match status" value="1"/>
</dbReference>
<dbReference type="FunFam" id="1.10.490.10:FF:000001">
    <property type="entry name" value="Hemoglobin subunit beta"/>
    <property type="match status" value="1"/>
</dbReference>
<dbReference type="Gene3D" id="1.10.490.10">
    <property type="entry name" value="Globins"/>
    <property type="match status" value="1"/>
</dbReference>
<dbReference type="InterPro" id="IPR000971">
    <property type="entry name" value="Globin"/>
</dbReference>
<dbReference type="InterPro" id="IPR009050">
    <property type="entry name" value="Globin-like_sf"/>
</dbReference>
<dbReference type="InterPro" id="IPR012292">
    <property type="entry name" value="Globin/Proto"/>
</dbReference>
<dbReference type="InterPro" id="IPR002337">
    <property type="entry name" value="Hemoglobin_b"/>
</dbReference>
<dbReference type="InterPro" id="IPR050056">
    <property type="entry name" value="Hemoglobin_oxygen_transport"/>
</dbReference>
<dbReference type="PANTHER" id="PTHR11442">
    <property type="entry name" value="HEMOGLOBIN FAMILY MEMBER"/>
    <property type="match status" value="1"/>
</dbReference>
<dbReference type="PANTHER" id="PTHR11442:SF42">
    <property type="entry name" value="HEMOGLOBIN SUBUNIT BETA"/>
    <property type="match status" value="1"/>
</dbReference>
<dbReference type="Pfam" id="PF00042">
    <property type="entry name" value="Globin"/>
    <property type="match status" value="1"/>
</dbReference>
<dbReference type="PRINTS" id="PR00814">
    <property type="entry name" value="BETAHAEM"/>
</dbReference>
<dbReference type="SUPFAM" id="SSF46458">
    <property type="entry name" value="Globin-like"/>
    <property type="match status" value="1"/>
</dbReference>
<dbReference type="PROSITE" id="PS01033">
    <property type="entry name" value="GLOBIN"/>
    <property type="match status" value="1"/>
</dbReference>
<gene>
    <name type="primary">HBB</name>
</gene>
<reference key="1">
    <citation type="journal article" date="1976" name="Biochem. Genet.">
        <title>Primary structure of the marmoset (Saguinus fusicollis) hemoglobin. I. Use of tryptic maleylated peptides in the solubilization and sequence elucidation of the alpha- and beta-chains.</title>
        <authorList>
            <person name="Lin K.D."/>
            <person name="Kim Y.K."/>
            <person name="Chernoff A.I."/>
        </authorList>
    </citation>
    <scope>PROTEIN SEQUENCE</scope>
</reference>
<proteinExistence type="evidence at protein level"/>
<organism>
    <name type="scientific">Leontocebus fuscicollis</name>
    <name type="common">Brown-mantled tamarin</name>
    <name type="synonym">Saguinus fuscicollis</name>
    <dbReference type="NCBI Taxonomy" id="9487"/>
    <lineage>
        <taxon>Eukaryota</taxon>
        <taxon>Metazoa</taxon>
        <taxon>Chordata</taxon>
        <taxon>Craniata</taxon>
        <taxon>Vertebrata</taxon>
        <taxon>Euteleostomi</taxon>
        <taxon>Mammalia</taxon>
        <taxon>Eutheria</taxon>
        <taxon>Euarchontoglires</taxon>
        <taxon>Primates</taxon>
        <taxon>Haplorrhini</taxon>
        <taxon>Platyrrhini</taxon>
        <taxon>Cebidae</taxon>
        <taxon>Callitrichinae</taxon>
        <taxon>Leontocebus</taxon>
    </lineage>
</organism>
<feature type="chain" id="PRO_0000053095" description="Hemoglobin subunit beta">
    <location>
        <begin position="1"/>
        <end position="146"/>
    </location>
</feature>
<feature type="domain" description="Globin" evidence="3">
    <location>
        <begin position="2"/>
        <end position="146"/>
    </location>
</feature>
<feature type="binding site" description="distal binding residue">
    <location>
        <position position="63"/>
    </location>
    <ligand>
        <name>heme b</name>
        <dbReference type="ChEBI" id="CHEBI:60344"/>
    </ligand>
    <ligandPart>
        <name>Fe</name>
        <dbReference type="ChEBI" id="CHEBI:18248"/>
    </ligandPart>
</feature>
<feature type="binding site" description="proximal binding residue">
    <location>
        <position position="92"/>
    </location>
    <ligand>
        <name>heme b</name>
        <dbReference type="ChEBI" id="CHEBI:60344"/>
    </ligand>
    <ligandPart>
        <name>Fe</name>
        <dbReference type="ChEBI" id="CHEBI:18248"/>
    </ligandPart>
</feature>
<feature type="modified residue" description="N-acetylvaline" evidence="1">
    <location>
        <position position="1"/>
    </location>
</feature>
<feature type="modified residue" description="Phosphothreonine" evidence="2">
    <location>
        <position position="12"/>
    </location>
</feature>
<feature type="modified residue" description="Phosphoserine" evidence="2">
    <location>
        <position position="44"/>
    </location>
</feature>
<feature type="modified residue" description="N6-acetyllysine" evidence="2">
    <location>
        <position position="59"/>
    </location>
</feature>
<feature type="modified residue" description="N6-acetyllysine" evidence="2">
    <location>
        <position position="82"/>
    </location>
</feature>
<feature type="modified residue" description="S-nitrosocysteine" evidence="2">
    <location>
        <position position="93"/>
    </location>
</feature>
<feature type="modified residue" description="N6-acetyllysine" evidence="2">
    <location>
        <position position="144"/>
    </location>
</feature>
<comment type="function">
    <text>Involved in oxygen transport from the lung to the various peripheral tissues.</text>
</comment>
<comment type="subunit">
    <text>Heterotetramer of two alpha chains and two beta chains.</text>
</comment>
<comment type="tissue specificity">
    <text>Red blood cells.</text>
</comment>
<comment type="similarity">
    <text evidence="3">Belongs to the globin family.</text>
</comment>
<accession>P02039</accession>
<name>HBB_LEOFU</name>
<keyword id="KW-0007">Acetylation</keyword>
<keyword id="KW-0903">Direct protein sequencing</keyword>
<keyword id="KW-0349">Heme</keyword>
<keyword id="KW-0408">Iron</keyword>
<keyword id="KW-0479">Metal-binding</keyword>
<keyword id="KW-0561">Oxygen transport</keyword>
<keyword id="KW-0597">Phosphoprotein</keyword>
<keyword id="KW-0702">S-nitrosylation</keyword>
<keyword id="KW-0813">Transport</keyword>
<evidence type="ECO:0000250" key="1">
    <source>
        <dbReference type="UniProtKB" id="P02086"/>
    </source>
</evidence>
<evidence type="ECO:0000250" key="2">
    <source>
        <dbReference type="UniProtKB" id="P68871"/>
    </source>
</evidence>
<evidence type="ECO:0000255" key="3">
    <source>
        <dbReference type="PROSITE-ProRule" id="PRU00238"/>
    </source>
</evidence>
<protein>
    <recommendedName>
        <fullName>Hemoglobin subunit beta</fullName>
    </recommendedName>
    <alternativeName>
        <fullName>Beta-globin</fullName>
    </alternativeName>
    <alternativeName>
        <fullName>Hemoglobin beta chain</fullName>
    </alternativeName>
</protein>
<sequence>VHLTGEEKSAVTTLWGKVNVEEVGGEALGRLLVVYPWTQRFFESFGDLSSPDAVMGNPKVKAHGKKVLGAFSDGLAHLDNLKGTFAQLSELHCNKLHVDPENFRLLGNVLVCVLAHHFGKEFTPQVQAAYQKVVAGVANALAHKYH</sequence>